<evidence type="ECO:0000250" key="1">
    <source>
        <dbReference type="UniProtKB" id="O95696"/>
    </source>
</evidence>
<evidence type="ECO:0000255" key="2">
    <source>
        <dbReference type="PROSITE-ProRule" id="PRU00035"/>
    </source>
</evidence>
<evidence type="ECO:0000255" key="3">
    <source>
        <dbReference type="PROSITE-ProRule" id="PRU00146"/>
    </source>
</evidence>
<evidence type="ECO:0000255" key="4">
    <source>
        <dbReference type="PROSITE-ProRule" id="PRU00162"/>
    </source>
</evidence>
<evidence type="ECO:0000255" key="5">
    <source>
        <dbReference type="PROSITE-ProRule" id="PRU01146"/>
    </source>
</evidence>
<evidence type="ECO:0000256" key="6">
    <source>
        <dbReference type="SAM" id="MobiDB-lite"/>
    </source>
</evidence>
<evidence type="ECO:0000269" key="7">
    <source>
    </source>
</evidence>
<evidence type="ECO:0000303" key="8">
    <source>
    </source>
</evidence>
<evidence type="ECO:0000303" key="9">
    <source ref="3"/>
</evidence>
<evidence type="ECO:0000312" key="10">
    <source>
        <dbReference type="EMBL" id="BAC39779.1"/>
    </source>
</evidence>
<evidence type="ECO:0000312" key="11">
    <source>
        <dbReference type="EMBL" id="BAD90158.1"/>
    </source>
</evidence>
<evidence type="ECO:0000312" key="12">
    <source>
        <dbReference type="MGI" id="MGI:1924161"/>
    </source>
</evidence>
<evidence type="ECO:0007744" key="13">
    <source>
    </source>
</evidence>
<evidence type="ECO:0007744" key="14">
    <source>
    </source>
</evidence>
<evidence type="ECO:0007744" key="15">
    <source>
    </source>
</evidence>
<comment type="function">
    <text evidence="7">Scaffold subunit of various histone acetyltransferase (HAT) complexes, such as the MOZ/MORF and HBO1 complexes, that acts as a regulator of hematopoiesis (PubMed:21753189). Plays a key role in HBO1 complex by directing KAT7/HBO1 specificity towards histone H3 'Lys-14' acetylation (H3K14ac), thereby promoting erythroid differentiation (PubMed:21753189).</text>
</comment>
<comment type="subunit">
    <text evidence="1 7">Component of some HBO1 complexes composed of KAT7/HBO1, MEAF6, ING4 and BRD1/BRPF2 (PubMed:21753189). Component of the MOZ/MORF complex composed at least of ING5, KAT6A, KAT6B, MEAF6 and one of BRPF1, BRD1/BRPF2 and BRPF3 (By similarity). Interacts (via PHD-type zinc finger domain) with unmodified histone H3 (By similarity). Interacts (via PWWP domain) with dimethylated and trimethylated 'Lys-79' on histone H3 (By similarity).</text>
</comment>
<comment type="subcellular location">
    <subcellularLocation>
        <location evidence="1">Nucleus</location>
    </subcellularLocation>
    <subcellularLocation>
        <location evidence="1">Chromosome</location>
    </subcellularLocation>
    <text evidence="1">Localizes to transcription start sites.</text>
</comment>
<comment type="alternative products">
    <event type="alternative splicing"/>
    <isoform>
        <id>G5E8P1-1</id>
        <name>1</name>
        <sequence type="displayed"/>
    </isoform>
    <isoform>
        <id>G5E8P1-2</id>
        <name>2</name>
        <sequence type="described" ref="VSP_060568"/>
    </isoform>
</comment>
<comment type="disruption phenotype">
    <text evidence="7">Embryos die at mid-gestation because of anemia and impaired fetal liver erythropoiesis.</text>
</comment>
<gene>
    <name evidence="8 12" type="primary">Brd1</name>
    <name evidence="8" type="synonym">Brpf2</name>
    <name evidence="9" type="synonym">Kiaa4191</name>
</gene>
<reference key="1">
    <citation type="journal article" date="2009" name="PLoS Biol.">
        <title>Lineage-specific biology revealed by a finished genome assembly of the mouse.</title>
        <authorList>
            <person name="Church D.M."/>
            <person name="Goodstadt L."/>
            <person name="Hillier L.W."/>
            <person name="Zody M.C."/>
            <person name="Goldstein S."/>
            <person name="She X."/>
            <person name="Bult C.J."/>
            <person name="Agarwala R."/>
            <person name="Cherry J.L."/>
            <person name="DiCuccio M."/>
            <person name="Hlavina W."/>
            <person name="Kapustin Y."/>
            <person name="Meric P."/>
            <person name="Maglott D."/>
            <person name="Birtle Z."/>
            <person name="Marques A.C."/>
            <person name="Graves T."/>
            <person name="Zhou S."/>
            <person name="Teague B."/>
            <person name="Potamousis K."/>
            <person name="Churas C."/>
            <person name="Place M."/>
            <person name="Herschleb J."/>
            <person name="Runnheim R."/>
            <person name="Forrest D."/>
            <person name="Amos-Landgraf J."/>
            <person name="Schwartz D.C."/>
            <person name="Cheng Z."/>
            <person name="Lindblad-Toh K."/>
            <person name="Eichler E.E."/>
            <person name="Ponting C.P."/>
        </authorList>
    </citation>
    <scope>NUCLEOTIDE SEQUENCE [LARGE SCALE GENOMIC DNA]</scope>
    <source>
        <strain>C57BL/6J</strain>
    </source>
</reference>
<reference key="2">
    <citation type="journal article" date="2005" name="Science">
        <title>The transcriptional landscape of the mammalian genome.</title>
        <authorList>
            <person name="Carninci P."/>
            <person name="Kasukawa T."/>
            <person name="Katayama S."/>
            <person name="Gough J."/>
            <person name="Frith M.C."/>
            <person name="Maeda N."/>
            <person name="Oyama R."/>
            <person name="Ravasi T."/>
            <person name="Lenhard B."/>
            <person name="Wells C."/>
            <person name="Kodzius R."/>
            <person name="Shimokawa K."/>
            <person name="Bajic V.B."/>
            <person name="Brenner S.E."/>
            <person name="Batalov S."/>
            <person name="Forrest A.R."/>
            <person name="Zavolan M."/>
            <person name="Davis M.J."/>
            <person name="Wilming L.G."/>
            <person name="Aidinis V."/>
            <person name="Allen J.E."/>
            <person name="Ambesi-Impiombato A."/>
            <person name="Apweiler R."/>
            <person name="Aturaliya R.N."/>
            <person name="Bailey T.L."/>
            <person name="Bansal M."/>
            <person name="Baxter L."/>
            <person name="Beisel K.W."/>
            <person name="Bersano T."/>
            <person name="Bono H."/>
            <person name="Chalk A.M."/>
            <person name="Chiu K.P."/>
            <person name="Choudhary V."/>
            <person name="Christoffels A."/>
            <person name="Clutterbuck D.R."/>
            <person name="Crowe M.L."/>
            <person name="Dalla E."/>
            <person name="Dalrymple B.P."/>
            <person name="de Bono B."/>
            <person name="Della Gatta G."/>
            <person name="di Bernardo D."/>
            <person name="Down T."/>
            <person name="Engstrom P."/>
            <person name="Fagiolini M."/>
            <person name="Faulkner G."/>
            <person name="Fletcher C.F."/>
            <person name="Fukushima T."/>
            <person name="Furuno M."/>
            <person name="Futaki S."/>
            <person name="Gariboldi M."/>
            <person name="Georgii-Hemming P."/>
            <person name="Gingeras T.R."/>
            <person name="Gojobori T."/>
            <person name="Green R.E."/>
            <person name="Gustincich S."/>
            <person name="Harbers M."/>
            <person name="Hayashi Y."/>
            <person name="Hensch T.K."/>
            <person name="Hirokawa N."/>
            <person name="Hill D."/>
            <person name="Huminiecki L."/>
            <person name="Iacono M."/>
            <person name="Ikeo K."/>
            <person name="Iwama A."/>
            <person name="Ishikawa T."/>
            <person name="Jakt M."/>
            <person name="Kanapin A."/>
            <person name="Katoh M."/>
            <person name="Kawasawa Y."/>
            <person name="Kelso J."/>
            <person name="Kitamura H."/>
            <person name="Kitano H."/>
            <person name="Kollias G."/>
            <person name="Krishnan S.P."/>
            <person name="Kruger A."/>
            <person name="Kummerfeld S.K."/>
            <person name="Kurochkin I.V."/>
            <person name="Lareau L.F."/>
            <person name="Lazarevic D."/>
            <person name="Lipovich L."/>
            <person name="Liu J."/>
            <person name="Liuni S."/>
            <person name="McWilliam S."/>
            <person name="Madan Babu M."/>
            <person name="Madera M."/>
            <person name="Marchionni L."/>
            <person name="Matsuda H."/>
            <person name="Matsuzawa S."/>
            <person name="Miki H."/>
            <person name="Mignone F."/>
            <person name="Miyake S."/>
            <person name="Morris K."/>
            <person name="Mottagui-Tabar S."/>
            <person name="Mulder N."/>
            <person name="Nakano N."/>
            <person name="Nakauchi H."/>
            <person name="Ng P."/>
            <person name="Nilsson R."/>
            <person name="Nishiguchi S."/>
            <person name="Nishikawa S."/>
            <person name="Nori F."/>
            <person name="Ohara O."/>
            <person name="Okazaki Y."/>
            <person name="Orlando V."/>
            <person name="Pang K.C."/>
            <person name="Pavan W.J."/>
            <person name="Pavesi G."/>
            <person name="Pesole G."/>
            <person name="Petrovsky N."/>
            <person name="Piazza S."/>
            <person name="Reed J."/>
            <person name="Reid J.F."/>
            <person name="Ring B.Z."/>
            <person name="Ringwald M."/>
            <person name="Rost B."/>
            <person name="Ruan Y."/>
            <person name="Salzberg S.L."/>
            <person name="Sandelin A."/>
            <person name="Schneider C."/>
            <person name="Schoenbach C."/>
            <person name="Sekiguchi K."/>
            <person name="Semple C.A."/>
            <person name="Seno S."/>
            <person name="Sessa L."/>
            <person name="Sheng Y."/>
            <person name="Shibata Y."/>
            <person name="Shimada H."/>
            <person name="Shimada K."/>
            <person name="Silva D."/>
            <person name="Sinclair B."/>
            <person name="Sperling S."/>
            <person name="Stupka E."/>
            <person name="Sugiura K."/>
            <person name="Sultana R."/>
            <person name="Takenaka Y."/>
            <person name="Taki K."/>
            <person name="Tammoja K."/>
            <person name="Tan S.L."/>
            <person name="Tang S."/>
            <person name="Taylor M.S."/>
            <person name="Tegner J."/>
            <person name="Teichmann S.A."/>
            <person name="Ueda H.R."/>
            <person name="van Nimwegen E."/>
            <person name="Verardo R."/>
            <person name="Wei C.L."/>
            <person name="Yagi K."/>
            <person name="Yamanishi H."/>
            <person name="Zabarovsky E."/>
            <person name="Zhu S."/>
            <person name="Zimmer A."/>
            <person name="Hide W."/>
            <person name="Bult C."/>
            <person name="Grimmond S.M."/>
            <person name="Teasdale R.D."/>
            <person name="Liu E.T."/>
            <person name="Brusic V."/>
            <person name="Quackenbush J."/>
            <person name="Wahlestedt C."/>
            <person name="Mattick J.S."/>
            <person name="Hume D.A."/>
            <person name="Kai C."/>
            <person name="Sasaki D."/>
            <person name="Tomaru Y."/>
            <person name="Fukuda S."/>
            <person name="Kanamori-Katayama M."/>
            <person name="Suzuki M."/>
            <person name="Aoki J."/>
            <person name="Arakawa T."/>
            <person name="Iida J."/>
            <person name="Imamura K."/>
            <person name="Itoh M."/>
            <person name="Kato T."/>
            <person name="Kawaji H."/>
            <person name="Kawagashira N."/>
            <person name="Kawashima T."/>
            <person name="Kojima M."/>
            <person name="Kondo S."/>
            <person name="Konno H."/>
            <person name="Nakano K."/>
            <person name="Ninomiya N."/>
            <person name="Nishio T."/>
            <person name="Okada M."/>
            <person name="Plessy C."/>
            <person name="Shibata K."/>
            <person name="Shiraki T."/>
            <person name="Suzuki S."/>
            <person name="Tagami M."/>
            <person name="Waki K."/>
            <person name="Watahiki A."/>
            <person name="Okamura-Oho Y."/>
            <person name="Suzuki H."/>
            <person name="Kawai J."/>
            <person name="Hayashizaki Y."/>
        </authorList>
    </citation>
    <scope>NUCLEOTIDE SEQUENCE [LARGE SCALE MRNA] OF 30-97</scope>
    <source>
        <strain evidence="10">C57BL/6J</strain>
        <tissue evidence="10">Lung</tissue>
    </source>
</reference>
<reference evidence="11" key="3">
    <citation type="submission" date="2005-02" db="EMBL/GenBank/DDBJ databases">
        <title>Prediction of the Coding Sequences of Mouse Homologues of KIAA Gene. The Complete Nucleotide Sequences of Mouse KIAA-homologous cDNAs Identified by Screening of Terminal sequences of cDNA Clones Randomly Sampled from Size-Fractionated Libraries.</title>
        <authorList>
            <person name="Okazaki N."/>
            <person name="Kikuno R.F."/>
            <person name="Ohara R."/>
            <person name="Inamoto S."/>
            <person name="Kitamura H."/>
            <person name="Nagase T."/>
            <person name="Ohara O."/>
            <person name="Koga H."/>
        </authorList>
    </citation>
    <scope>NUCLEOTIDE SEQUENCE [LARGE SCALE MRNA] OF 259-1058 (ISOFORM 2)</scope>
    <source>
        <tissue evidence="11">Spleen</tissue>
    </source>
</reference>
<reference evidence="13" key="4">
    <citation type="journal article" date="2007" name="Proc. Natl. Acad. Sci. U.S.A.">
        <title>Large-scale phosphorylation analysis of mouse liver.</title>
        <authorList>
            <person name="Villen J."/>
            <person name="Beausoleil S.A."/>
            <person name="Gerber S.A."/>
            <person name="Gygi S.P."/>
        </authorList>
    </citation>
    <scope>IDENTIFICATION BY MASS SPECTROMETRY [LARGE SCALE ANALYSIS]</scope>
</reference>
<reference evidence="14" key="5">
    <citation type="journal article" date="2010" name="Cell">
        <title>A tissue-specific atlas of mouse protein phosphorylation and expression.</title>
        <authorList>
            <person name="Huttlin E.L."/>
            <person name="Jedrychowski M.P."/>
            <person name="Elias J.E."/>
            <person name="Goswami T."/>
            <person name="Rad R."/>
            <person name="Beausoleil S.A."/>
            <person name="Villen J."/>
            <person name="Haas W."/>
            <person name="Sowa M.E."/>
            <person name="Gygi S.P."/>
        </authorList>
    </citation>
    <scope>IDENTIFICATION BY MASS SPECTROMETRY [LARGE SCALE ANALYSIS]</scope>
</reference>
<reference key="6">
    <citation type="journal article" date="2011" name="Blood">
        <title>The Hbo1-Brd1/Brpf2 complex is responsible for global acetylation of H3K14 and required for fetal liver erythropoiesis.</title>
        <authorList>
            <person name="Mishima Y."/>
            <person name="Miyagi S."/>
            <person name="Saraya A."/>
            <person name="Negishi M."/>
            <person name="Endoh M."/>
            <person name="Endo T.A."/>
            <person name="Toyoda T."/>
            <person name="Shinga J."/>
            <person name="Katsumoto T."/>
            <person name="Chiba T."/>
            <person name="Yamaguchi N."/>
            <person name="Kitabayashi I."/>
            <person name="Koseki H."/>
            <person name="Iwama A."/>
        </authorList>
    </citation>
    <scope>FUNCTION</scope>
    <scope>IDENTIFICATION IN THE HBO1 COMPLEX</scope>
    <scope>DISRUPTION PHENOTYPE</scope>
</reference>
<reference evidence="15" key="7">
    <citation type="journal article" date="2013" name="Mol. Cell">
        <title>SIRT5-mediated lysine desuccinylation impacts diverse metabolic pathways.</title>
        <authorList>
            <person name="Park J."/>
            <person name="Chen Y."/>
            <person name="Tishkoff D.X."/>
            <person name="Peng C."/>
            <person name="Tan M."/>
            <person name="Dai L."/>
            <person name="Xie Z."/>
            <person name="Zhang Y."/>
            <person name="Zwaans B.M."/>
            <person name="Skinner M.E."/>
            <person name="Lombard D.B."/>
            <person name="Zhao Y."/>
        </authorList>
    </citation>
    <scope>IDENTIFICATION BY MASS SPECTROMETRY [LARGE SCALE ANALYSIS]</scope>
</reference>
<feature type="chain" id="PRO_0000449610" description="Bromodomain-containing protein 1">
    <location>
        <begin position="1"/>
        <end position="1058"/>
    </location>
</feature>
<feature type="domain" description="Bromo" evidence="2">
    <location>
        <begin position="562"/>
        <end position="666"/>
    </location>
</feature>
<feature type="domain" description="PWWP" evidence="4">
    <location>
        <begin position="929"/>
        <end position="1012"/>
    </location>
</feature>
<feature type="zinc finger region" description="PHD-type 1" evidence="3">
    <location>
        <begin position="214"/>
        <end position="264"/>
    </location>
</feature>
<feature type="zinc finger region" description="C2HC pre-PHD-type" evidence="5">
    <location>
        <begin position="268"/>
        <end position="301"/>
    </location>
</feature>
<feature type="zinc finger region" description="PHD-type 2" evidence="5">
    <location>
        <begin position="325"/>
        <end position="389"/>
    </location>
</feature>
<feature type="region of interest" description="Disordered" evidence="6">
    <location>
        <begin position="1"/>
        <end position="25"/>
    </location>
</feature>
<feature type="region of interest" description="Interaction with KAT7/HBO1 and histones" evidence="1">
    <location>
        <begin position="31"/>
        <end position="80"/>
    </location>
</feature>
<feature type="region of interest" description="Disordered" evidence="6">
    <location>
        <begin position="754"/>
        <end position="776"/>
    </location>
</feature>
<feature type="region of interest" description="Disordered" evidence="6">
    <location>
        <begin position="791"/>
        <end position="847"/>
    </location>
</feature>
<feature type="compositionally biased region" description="Basic residues" evidence="6">
    <location>
        <begin position="1"/>
        <end position="12"/>
    </location>
</feature>
<feature type="compositionally biased region" description="Polar residues" evidence="6">
    <location>
        <begin position="754"/>
        <end position="763"/>
    </location>
</feature>
<feature type="modified residue" description="Phosphoserine" evidence="1">
    <location>
        <position position="128"/>
    </location>
</feature>
<feature type="modified residue" description="N6-acetyllysine" evidence="1">
    <location>
        <position position="368"/>
    </location>
</feature>
<feature type="modified residue" description="N6-acetyllysine" evidence="1">
    <location>
        <position position="516"/>
    </location>
</feature>
<feature type="modified residue" description="N6-acetyllysine" evidence="1">
    <location>
        <position position="519"/>
    </location>
</feature>
<feature type="modified residue" description="Phosphoserine" evidence="1">
    <location>
        <position position="803"/>
    </location>
</feature>
<feature type="modified residue" description="N6-acetyllysine" evidence="1">
    <location>
        <position position="903"/>
    </location>
</feature>
<feature type="modified residue" description="Phosphoserine" evidence="1">
    <location>
        <position position="1052"/>
    </location>
</feature>
<feature type="modified residue" description="Phosphoserine" evidence="1">
    <location>
        <position position="1055"/>
    </location>
</feature>
<feature type="cross-link" description="Glycyl lysine isopeptide (Lys-Gly) (interchain with G-Cter in SUMO2)" evidence="1">
    <location>
        <position position="554"/>
    </location>
</feature>
<feature type="cross-link" description="Glycyl lysine isopeptide (Lys-Gly) (interchain with G-Cter in SUMO2)" evidence="1">
    <location>
        <position position="594"/>
    </location>
</feature>
<feature type="splice variant" id="VSP_060568" description="In isoform 2.">
    <original>E</original>
    <variation>EGANSPPKLEPSDALPLPSNSETNSEPPTLNPVELHPEQSKLFKRVTFDNESHSTCTQSALVSGHPPEPTLASSGDVPAAAASAVAEPSSDVNRRTSVLFCKSKSVSPPKSAKNTETQPTSPQLGTKTFLSV</variation>
    <location>
        <position position="786"/>
    </location>
</feature>
<keyword id="KW-0007">Acetylation</keyword>
<keyword id="KW-0025">Alternative splicing</keyword>
<keyword id="KW-0103">Bromodomain</keyword>
<keyword id="KW-0156">Chromatin regulator</keyword>
<keyword id="KW-0158">Chromosome</keyword>
<keyword id="KW-0265">Erythrocyte maturation</keyword>
<keyword id="KW-1017">Isopeptide bond</keyword>
<keyword id="KW-0479">Metal-binding</keyword>
<keyword id="KW-0539">Nucleus</keyword>
<keyword id="KW-0597">Phosphoprotein</keyword>
<keyword id="KW-1185">Reference proteome</keyword>
<keyword id="KW-0677">Repeat</keyword>
<keyword id="KW-0832">Ubl conjugation</keyword>
<keyword id="KW-0862">Zinc</keyword>
<keyword id="KW-0863">Zinc-finger</keyword>
<name>BRD1_MOUSE</name>
<dbReference type="EMBL" id="AC117700">
    <property type="status" value="NOT_ANNOTATED_CDS"/>
    <property type="molecule type" value="Genomic_DNA"/>
</dbReference>
<dbReference type="EMBL" id="AC158976">
    <property type="status" value="NOT_ANNOTATED_CDS"/>
    <property type="molecule type" value="Genomic_DNA"/>
</dbReference>
<dbReference type="EMBL" id="AK220233">
    <property type="protein sequence ID" value="BAD90158.1"/>
    <property type="molecule type" value="mRNA"/>
</dbReference>
<dbReference type="EMBL" id="AK086982">
    <property type="protein sequence ID" value="BAC39779.1"/>
    <property type="molecule type" value="mRNA"/>
</dbReference>
<dbReference type="CCDS" id="CCDS27730.2">
    <molecule id="G5E8P1-2"/>
</dbReference>
<dbReference type="RefSeq" id="NP_001028446.2">
    <molecule id="G5E8P1-2"/>
    <property type="nucleotide sequence ID" value="NM_001033274.3"/>
</dbReference>
<dbReference type="RefSeq" id="XP_006520898.1">
    <molecule id="G5E8P1-1"/>
    <property type="nucleotide sequence ID" value="XM_006520835.4"/>
</dbReference>
<dbReference type="SMR" id="G5E8P1"/>
<dbReference type="ComplexPortal" id="CPX-801">
    <property type="entry name" value="MOZ2 histone acetyltransferase complex"/>
</dbReference>
<dbReference type="ComplexPortal" id="CPX-805">
    <property type="entry name" value="MORF2 histone acetyltransferase complex"/>
</dbReference>
<dbReference type="FunCoup" id="G5E8P1">
    <property type="interactions" value="2402"/>
</dbReference>
<dbReference type="STRING" id="10090.ENSMUSP00000105007"/>
<dbReference type="iPTMnet" id="G5E8P1"/>
<dbReference type="PhosphoSitePlus" id="G5E8P1"/>
<dbReference type="jPOST" id="G5E8P1"/>
<dbReference type="PaxDb" id="10090-ENSMUSP00000105007"/>
<dbReference type="PeptideAtlas" id="G5E8P1"/>
<dbReference type="ProteomicsDB" id="343018">
    <molecule id="G5E8P1-1"/>
</dbReference>
<dbReference type="ProteomicsDB" id="355447"/>
<dbReference type="Pumba" id="G5E8P1"/>
<dbReference type="Antibodypedia" id="251">
    <property type="antibodies" value="182 antibodies from 24 providers"/>
</dbReference>
<dbReference type="Ensembl" id="ENSMUST00000109380.8">
    <molecule id="G5E8P1-1"/>
    <property type="protein sequence ID" value="ENSMUSP00000105006.2"/>
    <property type="gene ID" value="ENSMUSG00000022387.18"/>
</dbReference>
<dbReference type="Ensembl" id="ENSMUST00000109381.9">
    <molecule id="G5E8P1-2"/>
    <property type="protein sequence ID" value="ENSMUSP00000105007.2"/>
    <property type="gene ID" value="ENSMUSG00000022387.18"/>
</dbReference>
<dbReference type="GeneID" id="223770"/>
<dbReference type="KEGG" id="mmu:223770"/>
<dbReference type="AGR" id="MGI:1924161"/>
<dbReference type="CTD" id="23774"/>
<dbReference type="MGI" id="MGI:1924161">
    <property type="gene designation" value="Brd1"/>
</dbReference>
<dbReference type="VEuPathDB" id="HostDB:ENSMUSG00000022387"/>
<dbReference type="eggNOG" id="KOG0955">
    <property type="taxonomic scope" value="Eukaryota"/>
</dbReference>
<dbReference type="GeneTree" id="ENSGT00940000157236"/>
<dbReference type="HOGENOM" id="CLU_003589_1_0_1"/>
<dbReference type="InParanoid" id="G5E8P1"/>
<dbReference type="OMA" id="GMWISTD"/>
<dbReference type="OrthoDB" id="44378at9989"/>
<dbReference type="TreeFam" id="TF316118"/>
<dbReference type="Reactome" id="R-MMU-3214847">
    <property type="pathway name" value="HATs acetylate histones"/>
</dbReference>
<dbReference type="Reactome" id="R-MMU-6804758">
    <property type="pathway name" value="Regulation of TP53 Activity through Acetylation"/>
</dbReference>
<dbReference type="BioGRID-ORCS" id="223770">
    <property type="hits" value="15 hits in 66 CRISPR screens"/>
</dbReference>
<dbReference type="ChiTaRS" id="Brd1">
    <property type="organism name" value="mouse"/>
</dbReference>
<dbReference type="PRO" id="PR:G5E8P1"/>
<dbReference type="Proteomes" id="UP000000589">
    <property type="component" value="Chromosome 15"/>
</dbReference>
<dbReference type="Bgee" id="ENSMUSG00000022387">
    <property type="expression patterns" value="Expressed in animal zygote and 255 other cell types or tissues"/>
</dbReference>
<dbReference type="GO" id="GO:0030425">
    <property type="term" value="C:dendrite"/>
    <property type="evidence" value="ECO:0007669"/>
    <property type="project" value="Ensembl"/>
</dbReference>
<dbReference type="GO" id="GO:0036409">
    <property type="term" value="C:histone H3-K14 acetyltransferase complex"/>
    <property type="evidence" value="ECO:0000314"/>
    <property type="project" value="UniProtKB"/>
</dbReference>
<dbReference type="GO" id="GO:0070776">
    <property type="term" value="C:MOZ/MORF histone acetyltransferase complex"/>
    <property type="evidence" value="ECO:0000250"/>
    <property type="project" value="ComplexPortal"/>
</dbReference>
<dbReference type="GO" id="GO:0016607">
    <property type="term" value="C:nuclear speck"/>
    <property type="evidence" value="ECO:0007669"/>
    <property type="project" value="Ensembl"/>
</dbReference>
<dbReference type="GO" id="GO:0005634">
    <property type="term" value="C:nucleus"/>
    <property type="evidence" value="ECO:0000250"/>
    <property type="project" value="UniProtKB"/>
</dbReference>
<dbReference type="GO" id="GO:0043204">
    <property type="term" value="C:perikaryon"/>
    <property type="evidence" value="ECO:0007669"/>
    <property type="project" value="Ensembl"/>
</dbReference>
<dbReference type="GO" id="GO:0036408">
    <property type="term" value="F:histone H3K14 acetyltransferase activity"/>
    <property type="evidence" value="ECO:0007669"/>
    <property type="project" value="Ensembl"/>
</dbReference>
<dbReference type="GO" id="GO:0043997">
    <property type="term" value="F:histone H4K12 acetyltransferase activity"/>
    <property type="evidence" value="ECO:0007669"/>
    <property type="project" value="Ensembl"/>
</dbReference>
<dbReference type="GO" id="GO:0043995">
    <property type="term" value="F:histone H4K5 acetyltransferase activity"/>
    <property type="evidence" value="ECO:0007669"/>
    <property type="project" value="Ensembl"/>
</dbReference>
<dbReference type="GO" id="GO:0043996">
    <property type="term" value="F:histone H4K8 acetyltransferase activity"/>
    <property type="evidence" value="ECO:0007669"/>
    <property type="project" value="Ensembl"/>
</dbReference>
<dbReference type="GO" id="GO:0140566">
    <property type="term" value="F:histone reader activity"/>
    <property type="evidence" value="ECO:0000314"/>
    <property type="project" value="UniProtKB"/>
</dbReference>
<dbReference type="GO" id="GO:0140063">
    <property type="term" value="F:unmodified histone reader activity"/>
    <property type="evidence" value="ECO:0007669"/>
    <property type="project" value="Ensembl"/>
</dbReference>
<dbReference type="GO" id="GO:0008270">
    <property type="term" value="F:zinc ion binding"/>
    <property type="evidence" value="ECO:0007669"/>
    <property type="project" value="UniProtKB-KW"/>
</dbReference>
<dbReference type="GO" id="GO:0043249">
    <property type="term" value="P:erythrocyte maturation"/>
    <property type="evidence" value="ECO:0007669"/>
    <property type="project" value="UniProtKB-KW"/>
</dbReference>
<dbReference type="GO" id="GO:0045648">
    <property type="term" value="P:positive regulation of erythrocyte differentiation"/>
    <property type="evidence" value="ECO:0000315"/>
    <property type="project" value="UniProtKB"/>
</dbReference>
<dbReference type="GO" id="GO:0050793">
    <property type="term" value="P:regulation of developmental process"/>
    <property type="evidence" value="ECO:0000303"/>
    <property type="project" value="ComplexPortal"/>
</dbReference>
<dbReference type="GO" id="GO:0006355">
    <property type="term" value="P:regulation of DNA-templated transcription"/>
    <property type="evidence" value="ECO:0000250"/>
    <property type="project" value="ComplexPortal"/>
</dbReference>
<dbReference type="GO" id="GO:1903706">
    <property type="term" value="P:regulation of hemopoiesis"/>
    <property type="evidence" value="ECO:0000303"/>
    <property type="project" value="ComplexPortal"/>
</dbReference>
<dbReference type="GO" id="GO:0051602">
    <property type="term" value="P:response to electrical stimulus"/>
    <property type="evidence" value="ECO:0007669"/>
    <property type="project" value="Ensembl"/>
</dbReference>
<dbReference type="GO" id="GO:0035902">
    <property type="term" value="P:response to immobilization stress"/>
    <property type="evidence" value="ECO:0007669"/>
    <property type="project" value="Ensembl"/>
</dbReference>
<dbReference type="CDD" id="cd05512">
    <property type="entry name" value="Bromo_brd1_like"/>
    <property type="match status" value="1"/>
</dbReference>
<dbReference type="CDD" id="cd15702">
    <property type="entry name" value="ePHD_BRPF2"/>
    <property type="match status" value="1"/>
</dbReference>
<dbReference type="CDD" id="cd15677">
    <property type="entry name" value="PHD_BRPF2"/>
    <property type="match status" value="1"/>
</dbReference>
<dbReference type="CDD" id="cd20157">
    <property type="entry name" value="PWWP_BRPF2"/>
    <property type="match status" value="1"/>
</dbReference>
<dbReference type="FunFam" id="3.30.40.10:FF:000008">
    <property type="entry name" value="Bromodomain containing 1, isoform CRA_a"/>
    <property type="match status" value="1"/>
</dbReference>
<dbReference type="FunFam" id="2.30.30.140:FF:000008">
    <property type="entry name" value="Bromodomain containing 1, isoform CRA_b"/>
    <property type="match status" value="1"/>
</dbReference>
<dbReference type="FunFam" id="3.30.40.10:FF:000007">
    <property type="entry name" value="Bromodomain containing 1, isoform CRA_b"/>
    <property type="match status" value="1"/>
</dbReference>
<dbReference type="FunFam" id="1.20.920.10:FF:000007">
    <property type="entry name" value="Bromodomain-containing protein 1"/>
    <property type="match status" value="1"/>
</dbReference>
<dbReference type="Gene3D" id="2.30.30.140">
    <property type="match status" value="1"/>
</dbReference>
<dbReference type="Gene3D" id="1.20.920.10">
    <property type="entry name" value="Bromodomain-like"/>
    <property type="match status" value="1"/>
</dbReference>
<dbReference type="Gene3D" id="3.30.40.10">
    <property type="entry name" value="Zinc/RING finger domain, C3HC4 (zinc finger)"/>
    <property type="match status" value="2"/>
</dbReference>
<dbReference type="InterPro" id="IPR001487">
    <property type="entry name" value="Bromodomain"/>
</dbReference>
<dbReference type="InterPro" id="IPR036427">
    <property type="entry name" value="Bromodomain-like_sf"/>
</dbReference>
<dbReference type="InterPro" id="IPR018359">
    <property type="entry name" value="Bromodomain_CS"/>
</dbReference>
<dbReference type="InterPro" id="IPR042004">
    <property type="entry name" value="BRPF2_ePHD"/>
</dbReference>
<dbReference type="InterPro" id="IPR042009">
    <property type="entry name" value="BRPF2_PHD"/>
</dbReference>
<dbReference type="InterPro" id="IPR019542">
    <property type="entry name" value="Enhancer_polycomb-like_N"/>
</dbReference>
<dbReference type="InterPro" id="IPR034732">
    <property type="entry name" value="EPHD"/>
</dbReference>
<dbReference type="InterPro" id="IPR050701">
    <property type="entry name" value="Histone_Mod_Regulator"/>
</dbReference>
<dbReference type="InterPro" id="IPR000313">
    <property type="entry name" value="PWWP_dom"/>
</dbReference>
<dbReference type="InterPro" id="IPR019786">
    <property type="entry name" value="Zinc_finger_PHD-type_CS"/>
</dbReference>
<dbReference type="InterPro" id="IPR011011">
    <property type="entry name" value="Znf_FYVE_PHD"/>
</dbReference>
<dbReference type="InterPro" id="IPR001965">
    <property type="entry name" value="Znf_PHD"/>
</dbReference>
<dbReference type="InterPro" id="IPR019787">
    <property type="entry name" value="Znf_PHD-finger"/>
</dbReference>
<dbReference type="InterPro" id="IPR013083">
    <property type="entry name" value="Znf_RING/FYVE/PHD"/>
</dbReference>
<dbReference type="PANTHER" id="PTHR13793:SF17">
    <property type="entry name" value="BROMODOMAIN-CONTAINING PROTEIN 1"/>
    <property type="match status" value="1"/>
</dbReference>
<dbReference type="PANTHER" id="PTHR13793">
    <property type="entry name" value="PHD FINGER PROTEINS"/>
    <property type="match status" value="1"/>
</dbReference>
<dbReference type="Pfam" id="PF00439">
    <property type="entry name" value="Bromodomain"/>
    <property type="match status" value="1"/>
</dbReference>
<dbReference type="Pfam" id="PF10513">
    <property type="entry name" value="EPL1"/>
    <property type="match status" value="1"/>
</dbReference>
<dbReference type="Pfam" id="PF13831">
    <property type="entry name" value="PHD_2"/>
    <property type="match status" value="1"/>
</dbReference>
<dbReference type="Pfam" id="PF00855">
    <property type="entry name" value="PWWP"/>
    <property type="match status" value="1"/>
</dbReference>
<dbReference type="Pfam" id="PF13832">
    <property type="entry name" value="zf-HC5HC2H_2"/>
    <property type="match status" value="1"/>
</dbReference>
<dbReference type="PRINTS" id="PR00503">
    <property type="entry name" value="BROMODOMAIN"/>
</dbReference>
<dbReference type="SMART" id="SM00297">
    <property type="entry name" value="BROMO"/>
    <property type="match status" value="1"/>
</dbReference>
<dbReference type="SMART" id="SM00249">
    <property type="entry name" value="PHD"/>
    <property type="match status" value="2"/>
</dbReference>
<dbReference type="SMART" id="SM00293">
    <property type="entry name" value="PWWP"/>
    <property type="match status" value="1"/>
</dbReference>
<dbReference type="SUPFAM" id="SSF47370">
    <property type="entry name" value="Bromodomain"/>
    <property type="match status" value="1"/>
</dbReference>
<dbReference type="SUPFAM" id="SSF57903">
    <property type="entry name" value="FYVE/PHD zinc finger"/>
    <property type="match status" value="1"/>
</dbReference>
<dbReference type="SUPFAM" id="SSF63748">
    <property type="entry name" value="Tudor/PWWP/MBT"/>
    <property type="match status" value="1"/>
</dbReference>
<dbReference type="PROSITE" id="PS00633">
    <property type="entry name" value="BROMODOMAIN_1"/>
    <property type="match status" value="1"/>
</dbReference>
<dbReference type="PROSITE" id="PS50014">
    <property type="entry name" value="BROMODOMAIN_2"/>
    <property type="match status" value="1"/>
</dbReference>
<dbReference type="PROSITE" id="PS51805">
    <property type="entry name" value="EPHD"/>
    <property type="match status" value="1"/>
</dbReference>
<dbReference type="PROSITE" id="PS50812">
    <property type="entry name" value="PWWP"/>
    <property type="match status" value="1"/>
</dbReference>
<dbReference type="PROSITE" id="PS01359">
    <property type="entry name" value="ZF_PHD_1"/>
    <property type="match status" value="1"/>
</dbReference>
<dbReference type="PROSITE" id="PS50016">
    <property type="entry name" value="ZF_PHD_2"/>
    <property type="match status" value="1"/>
</dbReference>
<accession>G5E8P1</accession>
<accession>E9PZ26</accession>
<accession>Q571F6</accession>
<accession>Q8BU83</accession>
<sequence>MRRKGRCHRGSAARHPSSPCSIKHSPTRETLTYAQAQRMVEIEIEGRLHRISIFDPLEIILEDDLTAQEMSECNSNKENSERPPVCLRTKRHKNNRVKKKNEVLPSTHGTPASASALPEPKVRIVEYSPPSAPRRPPVYYKFIEKSAEELDNEVEYDMDEEDYAWLEIINEKRKGDCVSAVSQNMFEFLMDRFEKESYCENQKQGEQQSLIDEDAVCCICMDGECQNSNVILFCDMCNLAVHQECYGVPYIPEGQWLCRHCLQSRARPADCVLCPNKGGAFKKTDDDRWGHVVCALWIPEVGFANTVFIEPIDGVRNIPPARWKLTCYLCKQKGVGACIQCHKANCYTAFHVTCAQKAGLYMKMEPVKELTGGSATFSVRKTAYCDVHTPPGCTRRPLNIYGDVEMKNGVCRKESSVKTVRSTSKVRKKAKKAKKTLAEPCAVLPTVCAPYIPPQRLNRIANQVAIQRKKQFVERAHSYWLLKRLSRNGAPLLRRLQSSLQSQRNTQQRENDEEMKAAKEKLKYWQRLRHDLERARLLIELLRKREKLKREQVKVEQMAMELRLTPLTVLLRSVLEQLQEKDPAKIFAQPVSLKEVPDYLDHIKHPMDFATMRKRLEAQGYKNLHAFEEDFNLIVDNCMKYNAKDTVFYRAAVRLRDQGGVVLRQARREVESIGLEEASGMHLPERPIAAPRRPFSWEEVDRLLDPANRAHMSLEEQLRELLDKLDLTCSMKSSGSRSKRAKLLKKEIALLRNKLSQQHSQAPPTGAGTGGFEDEAAPLAPDTAEEVLPRLETLLQPRKRSRSTCGDSEVEEESPGKRLDTGLTNGFGGARSEQEPGGGPGRKAAPRRRCASESSICSSNSPLCDSSFSTPKCGRGKPALVRRHTLEDRSELISCIENGNYAKAARIAAEVGQSNMWISTDAAASVLEPLKVVWAKCSGYPSYPALIIDPKMPRVPGHHNGVTIPAPPLDVLKIGEHMQTKSEEKLFLVLFFDNKRSWQWLPKSKMVPLGVDETIDKLKMMEGRNSSIRKAVRIAFDRAMNHLSRVHGEPASDLSDID</sequence>
<protein>
    <recommendedName>
        <fullName evidence="8">Bromodomain-containing protein 1</fullName>
    </recommendedName>
    <alternativeName>
        <fullName evidence="8">Bromodomain and PHD finger-containing protein 2</fullName>
    </alternativeName>
</protein>
<proteinExistence type="evidence at protein level"/>
<organism>
    <name type="scientific">Mus musculus</name>
    <name type="common">Mouse</name>
    <dbReference type="NCBI Taxonomy" id="10090"/>
    <lineage>
        <taxon>Eukaryota</taxon>
        <taxon>Metazoa</taxon>
        <taxon>Chordata</taxon>
        <taxon>Craniata</taxon>
        <taxon>Vertebrata</taxon>
        <taxon>Euteleostomi</taxon>
        <taxon>Mammalia</taxon>
        <taxon>Eutheria</taxon>
        <taxon>Euarchontoglires</taxon>
        <taxon>Glires</taxon>
        <taxon>Rodentia</taxon>
        <taxon>Myomorpha</taxon>
        <taxon>Muroidea</taxon>
        <taxon>Muridae</taxon>
        <taxon>Murinae</taxon>
        <taxon>Mus</taxon>
        <taxon>Mus</taxon>
    </lineage>
</organism>